<evidence type="ECO:0000255" key="1">
    <source>
        <dbReference type="HAMAP-Rule" id="MF_00570"/>
    </source>
</evidence>
<dbReference type="EC" id="6.3.4.21" evidence="1"/>
<dbReference type="EMBL" id="AE008923">
    <property type="protein sequence ID" value="AAM38364.1"/>
    <property type="molecule type" value="Genomic_DNA"/>
</dbReference>
<dbReference type="RefSeq" id="WP_003490746.1">
    <property type="nucleotide sequence ID" value="NC_003919.1"/>
</dbReference>
<dbReference type="SMR" id="Q8PGU5"/>
<dbReference type="GeneID" id="66912558"/>
<dbReference type="KEGG" id="xac:XAC3521"/>
<dbReference type="eggNOG" id="COG1488">
    <property type="taxonomic scope" value="Bacteria"/>
</dbReference>
<dbReference type="HOGENOM" id="CLU_030991_1_0_6"/>
<dbReference type="UniPathway" id="UPA00253">
    <property type="reaction ID" value="UER00457"/>
</dbReference>
<dbReference type="Proteomes" id="UP000000576">
    <property type="component" value="Chromosome"/>
</dbReference>
<dbReference type="GO" id="GO:0005829">
    <property type="term" value="C:cytosol"/>
    <property type="evidence" value="ECO:0007669"/>
    <property type="project" value="TreeGrafter"/>
</dbReference>
<dbReference type="GO" id="GO:0004516">
    <property type="term" value="F:nicotinate phosphoribosyltransferase activity"/>
    <property type="evidence" value="ECO:0007669"/>
    <property type="project" value="UniProtKB-UniRule"/>
</dbReference>
<dbReference type="GO" id="GO:0034355">
    <property type="term" value="P:NAD biosynthetic process via the salvage pathway"/>
    <property type="evidence" value="ECO:0007669"/>
    <property type="project" value="TreeGrafter"/>
</dbReference>
<dbReference type="CDD" id="cd01401">
    <property type="entry name" value="PncB_like"/>
    <property type="match status" value="1"/>
</dbReference>
<dbReference type="FunFam" id="3.20.140.10:FF:000008">
    <property type="entry name" value="Nicotinate phosphoribosyltransferase"/>
    <property type="match status" value="1"/>
</dbReference>
<dbReference type="Gene3D" id="3.20.140.10">
    <property type="entry name" value="nicotinate phosphoribosyltransferase"/>
    <property type="match status" value="1"/>
</dbReference>
<dbReference type="HAMAP" id="MF_00570">
    <property type="entry name" value="NAPRTase"/>
    <property type="match status" value="1"/>
</dbReference>
<dbReference type="InterPro" id="IPR041525">
    <property type="entry name" value="N/Namide_PRibTrfase"/>
</dbReference>
<dbReference type="InterPro" id="IPR040727">
    <property type="entry name" value="NAPRTase_N"/>
</dbReference>
<dbReference type="InterPro" id="IPR006406">
    <property type="entry name" value="Nic_PRibTrfase"/>
</dbReference>
<dbReference type="InterPro" id="IPR007229">
    <property type="entry name" value="Nic_PRibTrfase-Fam"/>
</dbReference>
<dbReference type="InterPro" id="IPR036068">
    <property type="entry name" value="Nicotinate_pribotase-like_C"/>
</dbReference>
<dbReference type="NCBIfam" id="TIGR01514">
    <property type="entry name" value="NAPRTase"/>
    <property type="match status" value="1"/>
</dbReference>
<dbReference type="NCBIfam" id="NF003704">
    <property type="entry name" value="PRK05321.1"/>
    <property type="match status" value="1"/>
</dbReference>
<dbReference type="PANTHER" id="PTHR11098">
    <property type="entry name" value="NICOTINATE PHOSPHORIBOSYLTRANSFERASE"/>
    <property type="match status" value="1"/>
</dbReference>
<dbReference type="PANTHER" id="PTHR11098:SF1">
    <property type="entry name" value="NICOTINATE PHOSPHORIBOSYLTRANSFERASE"/>
    <property type="match status" value="1"/>
</dbReference>
<dbReference type="Pfam" id="PF04095">
    <property type="entry name" value="NAPRTase"/>
    <property type="match status" value="1"/>
</dbReference>
<dbReference type="Pfam" id="PF17767">
    <property type="entry name" value="NAPRTase_N"/>
    <property type="match status" value="1"/>
</dbReference>
<dbReference type="PIRSF" id="PIRSF000484">
    <property type="entry name" value="NAPRT"/>
    <property type="match status" value="1"/>
</dbReference>
<dbReference type="SUPFAM" id="SSF51690">
    <property type="entry name" value="Nicotinate/Quinolinate PRTase C-terminal domain-like"/>
    <property type="match status" value="1"/>
</dbReference>
<dbReference type="SUPFAM" id="SSF54675">
    <property type="entry name" value="Nicotinate/Quinolinate PRTase N-terminal domain-like"/>
    <property type="match status" value="1"/>
</dbReference>
<reference key="1">
    <citation type="journal article" date="2002" name="Nature">
        <title>Comparison of the genomes of two Xanthomonas pathogens with differing host specificities.</title>
        <authorList>
            <person name="da Silva A.C.R."/>
            <person name="Ferro J.A."/>
            <person name="Reinach F.C."/>
            <person name="Farah C.S."/>
            <person name="Furlan L.R."/>
            <person name="Quaggio R.B."/>
            <person name="Monteiro-Vitorello C.B."/>
            <person name="Van Sluys M.A."/>
            <person name="Almeida N.F. Jr."/>
            <person name="Alves L.M.C."/>
            <person name="do Amaral A.M."/>
            <person name="Bertolini M.C."/>
            <person name="Camargo L.E.A."/>
            <person name="Camarotte G."/>
            <person name="Cannavan F."/>
            <person name="Cardozo J."/>
            <person name="Chambergo F."/>
            <person name="Ciapina L.P."/>
            <person name="Cicarelli R.M.B."/>
            <person name="Coutinho L.L."/>
            <person name="Cursino-Santos J.R."/>
            <person name="El-Dorry H."/>
            <person name="Faria J.B."/>
            <person name="Ferreira A.J.S."/>
            <person name="Ferreira R.C.C."/>
            <person name="Ferro M.I.T."/>
            <person name="Formighieri E.F."/>
            <person name="Franco M.C."/>
            <person name="Greggio C.C."/>
            <person name="Gruber A."/>
            <person name="Katsuyama A.M."/>
            <person name="Kishi L.T."/>
            <person name="Leite R.P."/>
            <person name="Lemos E.G.M."/>
            <person name="Lemos M.V.F."/>
            <person name="Locali E.C."/>
            <person name="Machado M.A."/>
            <person name="Madeira A.M.B.N."/>
            <person name="Martinez-Rossi N.M."/>
            <person name="Martins E.C."/>
            <person name="Meidanis J."/>
            <person name="Menck C.F.M."/>
            <person name="Miyaki C.Y."/>
            <person name="Moon D.H."/>
            <person name="Moreira L.M."/>
            <person name="Novo M.T.M."/>
            <person name="Okura V.K."/>
            <person name="Oliveira M.C."/>
            <person name="Oliveira V.R."/>
            <person name="Pereira H.A."/>
            <person name="Rossi A."/>
            <person name="Sena J.A.D."/>
            <person name="Silva C."/>
            <person name="de Souza R.F."/>
            <person name="Spinola L.A.F."/>
            <person name="Takita M.A."/>
            <person name="Tamura R.E."/>
            <person name="Teixeira E.C."/>
            <person name="Tezza R.I.D."/>
            <person name="Trindade dos Santos M."/>
            <person name="Truffi D."/>
            <person name="Tsai S.M."/>
            <person name="White F.F."/>
            <person name="Setubal J.C."/>
            <person name="Kitajima J.P."/>
        </authorList>
    </citation>
    <scope>NUCLEOTIDE SEQUENCE [LARGE SCALE GENOMIC DNA]</scope>
    <source>
        <strain>306</strain>
    </source>
</reference>
<name>PNCB_XANAC</name>
<feature type="chain" id="PRO_0000205851" description="Nicotinate phosphoribosyltransferase">
    <location>
        <begin position="1"/>
        <end position="392"/>
    </location>
</feature>
<feature type="modified residue" description="Phosphohistidine; by autocatalysis" evidence="1">
    <location>
        <position position="214"/>
    </location>
</feature>
<gene>
    <name evidence="1" type="primary">pncB</name>
    <name type="ordered locus">XAC3521</name>
</gene>
<accession>Q8PGU5</accession>
<protein>
    <recommendedName>
        <fullName evidence="1">Nicotinate phosphoribosyltransferase</fullName>
        <shortName evidence="1">NAPRTase</shortName>
        <ecNumber evidence="1">6.3.4.21</ecNumber>
    </recommendedName>
</protein>
<sequence>MIIHSLLDTDLYKFTMMQAVLHQHPAAQVDYRFKCRTPGVDLAQFIDEISREIDALCRLRLREDEVDYLRSLRFIKPDFADFLALFHLDRKYLSLTASATHPGEIELTIRGPWLHTILFEVPLLAIINEVWFRNTSEPDFEEGRSRLREKVASLRSMPAGCKIADYGTRRRYSRQWHGELLPLLRDGLGEQFVGTSNVYFAKQYGLTPLGTMAHEYLQAFQALGPRLRDSQVAALESWAREYRGDLGIALSDVVGLDAFLRDFDLYFCKLFDGMRHDSGDPFEWGERVIAHLEAHRVDPRTKVLVFSDGLNIDKVMRLYQHFHTRCRLAFGVGTSLTNDLGPTPLQIVIKMVRCNGQPVAKLSDSPGKSMCEDIGYLRYLRDVFGLPPMAET</sequence>
<organism>
    <name type="scientific">Xanthomonas axonopodis pv. citri (strain 306)</name>
    <dbReference type="NCBI Taxonomy" id="190486"/>
    <lineage>
        <taxon>Bacteria</taxon>
        <taxon>Pseudomonadati</taxon>
        <taxon>Pseudomonadota</taxon>
        <taxon>Gammaproteobacteria</taxon>
        <taxon>Lysobacterales</taxon>
        <taxon>Lysobacteraceae</taxon>
        <taxon>Xanthomonas</taxon>
    </lineage>
</organism>
<keyword id="KW-0436">Ligase</keyword>
<keyword id="KW-0597">Phosphoprotein</keyword>
<keyword id="KW-0662">Pyridine nucleotide biosynthesis</keyword>
<proteinExistence type="inferred from homology"/>
<comment type="function">
    <text evidence="1">Catalyzes the synthesis of beta-nicotinate D-ribonucleotide from nicotinate and 5-phospho-D-ribose 1-phosphate at the expense of ATP.</text>
</comment>
<comment type="catalytic activity">
    <reaction evidence="1">
        <text>nicotinate + 5-phospho-alpha-D-ribose 1-diphosphate + ATP + H2O = nicotinate beta-D-ribonucleotide + ADP + phosphate + diphosphate</text>
        <dbReference type="Rhea" id="RHEA:36163"/>
        <dbReference type="ChEBI" id="CHEBI:15377"/>
        <dbReference type="ChEBI" id="CHEBI:30616"/>
        <dbReference type="ChEBI" id="CHEBI:32544"/>
        <dbReference type="ChEBI" id="CHEBI:33019"/>
        <dbReference type="ChEBI" id="CHEBI:43474"/>
        <dbReference type="ChEBI" id="CHEBI:57502"/>
        <dbReference type="ChEBI" id="CHEBI:58017"/>
        <dbReference type="ChEBI" id="CHEBI:456216"/>
        <dbReference type="EC" id="6.3.4.21"/>
    </reaction>
</comment>
<comment type="pathway">
    <text evidence="1">Cofactor biosynthesis; NAD(+) biosynthesis; nicotinate D-ribonucleotide from nicotinate: step 1/1.</text>
</comment>
<comment type="PTM">
    <text evidence="1">Transiently phosphorylated on a His residue during the reaction cycle. Phosphorylation strongly increases the affinity for substrates and increases the rate of nicotinate D-ribonucleotide production. Dephosphorylation regenerates the low-affinity form of the enzyme, leading to product release.</text>
</comment>
<comment type="similarity">
    <text evidence="1">Belongs to the NAPRTase family.</text>
</comment>